<protein>
    <recommendedName>
        <fullName evidence="1">Bifunctional protein FolD</fullName>
    </recommendedName>
    <domain>
        <recommendedName>
            <fullName evidence="1">Methylenetetrahydrofolate dehydrogenase</fullName>
            <ecNumber evidence="1">1.5.1.5</ecNumber>
        </recommendedName>
    </domain>
    <domain>
        <recommendedName>
            <fullName evidence="1">Methenyltetrahydrofolate cyclohydrolase</fullName>
            <ecNumber evidence="1">3.5.4.9</ecNumber>
        </recommendedName>
    </domain>
</protein>
<evidence type="ECO:0000255" key="1">
    <source>
        <dbReference type="HAMAP-Rule" id="MF_01576"/>
    </source>
</evidence>
<comment type="function">
    <text evidence="1">Catalyzes the oxidation of 5,10-methylenetetrahydrofolate to 5,10-methenyltetrahydrofolate and then the hydrolysis of 5,10-methenyltetrahydrofolate to 10-formyltetrahydrofolate.</text>
</comment>
<comment type="catalytic activity">
    <reaction evidence="1">
        <text>(6R)-5,10-methylene-5,6,7,8-tetrahydrofolate + NADP(+) = (6R)-5,10-methenyltetrahydrofolate + NADPH</text>
        <dbReference type="Rhea" id="RHEA:22812"/>
        <dbReference type="ChEBI" id="CHEBI:15636"/>
        <dbReference type="ChEBI" id="CHEBI:57455"/>
        <dbReference type="ChEBI" id="CHEBI:57783"/>
        <dbReference type="ChEBI" id="CHEBI:58349"/>
        <dbReference type="EC" id="1.5.1.5"/>
    </reaction>
</comment>
<comment type="catalytic activity">
    <reaction evidence="1">
        <text>(6R)-5,10-methenyltetrahydrofolate + H2O = (6R)-10-formyltetrahydrofolate + H(+)</text>
        <dbReference type="Rhea" id="RHEA:23700"/>
        <dbReference type="ChEBI" id="CHEBI:15377"/>
        <dbReference type="ChEBI" id="CHEBI:15378"/>
        <dbReference type="ChEBI" id="CHEBI:57455"/>
        <dbReference type="ChEBI" id="CHEBI:195366"/>
        <dbReference type="EC" id="3.5.4.9"/>
    </reaction>
</comment>
<comment type="pathway">
    <text evidence="1">One-carbon metabolism; tetrahydrofolate interconversion.</text>
</comment>
<comment type="subunit">
    <text evidence="1">Homodimer.</text>
</comment>
<comment type="similarity">
    <text evidence="1">Belongs to the tetrahydrofolate dehydrogenase/cyclohydrolase family.</text>
</comment>
<feature type="chain" id="PRO_0000305860" description="Bifunctional protein FolD">
    <location>
        <begin position="1"/>
        <end position="281"/>
    </location>
</feature>
<feature type="binding site" evidence="1">
    <location>
        <begin position="165"/>
        <end position="167"/>
    </location>
    <ligand>
        <name>NADP(+)</name>
        <dbReference type="ChEBI" id="CHEBI:58349"/>
    </ligand>
</feature>
<feature type="binding site" evidence="1">
    <location>
        <position position="190"/>
    </location>
    <ligand>
        <name>NADP(+)</name>
        <dbReference type="ChEBI" id="CHEBI:58349"/>
    </ligand>
</feature>
<name>FOLD_POLNA</name>
<dbReference type="EC" id="1.5.1.5" evidence="1"/>
<dbReference type="EC" id="3.5.4.9" evidence="1"/>
<dbReference type="EMBL" id="CP000529">
    <property type="protein sequence ID" value="ABM37088.1"/>
    <property type="molecule type" value="Genomic_DNA"/>
</dbReference>
<dbReference type="RefSeq" id="WP_011801169.1">
    <property type="nucleotide sequence ID" value="NC_008781.1"/>
</dbReference>
<dbReference type="SMR" id="A1VN60"/>
<dbReference type="STRING" id="365044.Pnap_1778"/>
<dbReference type="KEGG" id="pna:Pnap_1778"/>
<dbReference type="eggNOG" id="COG0190">
    <property type="taxonomic scope" value="Bacteria"/>
</dbReference>
<dbReference type="HOGENOM" id="CLU_034045_2_1_4"/>
<dbReference type="OrthoDB" id="9803580at2"/>
<dbReference type="UniPathway" id="UPA00193"/>
<dbReference type="Proteomes" id="UP000000644">
    <property type="component" value="Chromosome"/>
</dbReference>
<dbReference type="GO" id="GO:0005829">
    <property type="term" value="C:cytosol"/>
    <property type="evidence" value="ECO:0007669"/>
    <property type="project" value="TreeGrafter"/>
</dbReference>
<dbReference type="GO" id="GO:0004477">
    <property type="term" value="F:methenyltetrahydrofolate cyclohydrolase activity"/>
    <property type="evidence" value="ECO:0007669"/>
    <property type="project" value="UniProtKB-UniRule"/>
</dbReference>
<dbReference type="GO" id="GO:0004488">
    <property type="term" value="F:methylenetetrahydrofolate dehydrogenase (NADP+) activity"/>
    <property type="evidence" value="ECO:0007669"/>
    <property type="project" value="UniProtKB-UniRule"/>
</dbReference>
<dbReference type="GO" id="GO:0000105">
    <property type="term" value="P:L-histidine biosynthetic process"/>
    <property type="evidence" value="ECO:0007669"/>
    <property type="project" value="UniProtKB-KW"/>
</dbReference>
<dbReference type="GO" id="GO:0009086">
    <property type="term" value="P:methionine biosynthetic process"/>
    <property type="evidence" value="ECO:0007669"/>
    <property type="project" value="UniProtKB-KW"/>
</dbReference>
<dbReference type="GO" id="GO:0006164">
    <property type="term" value="P:purine nucleotide biosynthetic process"/>
    <property type="evidence" value="ECO:0007669"/>
    <property type="project" value="UniProtKB-KW"/>
</dbReference>
<dbReference type="GO" id="GO:0035999">
    <property type="term" value="P:tetrahydrofolate interconversion"/>
    <property type="evidence" value="ECO:0007669"/>
    <property type="project" value="UniProtKB-UniRule"/>
</dbReference>
<dbReference type="CDD" id="cd01080">
    <property type="entry name" value="NAD_bind_m-THF_DH_Cyclohyd"/>
    <property type="match status" value="1"/>
</dbReference>
<dbReference type="FunFam" id="3.40.50.720:FF:000094">
    <property type="entry name" value="Bifunctional protein FolD"/>
    <property type="match status" value="1"/>
</dbReference>
<dbReference type="FunFam" id="3.40.50.10860:FF:000005">
    <property type="entry name" value="C-1-tetrahydrofolate synthase, cytoplasmic, putative"/>
    <property type="match status" value="1"/>
</dbReference>
<dbReference type="Gene3D" id="3.40.50.10860">
    <property type="entry name" value="Leucine Dehydrogenase, chain A, domain 1"/>
    <property type="match status" value="1"/>
</dbReference>
<dbReference type="Gene3D" id="3.40.50.720">
    <property type="entry name" value="NAD(P)-binding Rossmann-like Domain"/>
    <property type="match status" value="1"/>
</dbReference>
<dbReference type="HAMAP" id="MF_01576">
    <property type="entry name" value="THF_DHG_CYH"/>
    <property type="match status" value="1"/>
</dbReference>
<dbReference type="InterPro" id="IPR046346">
    <property type="entry name" value="Aminoacid_DH-like_N_sf"/>
</dbReference>
<dbReference type="InterPro" id="IPR036291">
    <property type="entry name" value="NAD(P)-bd_dom_sf"/>
</dbReference>
<dbReference type="InterPro" id="IPR000672">
    <property type="entry name" value="THF_DH/CycHdrlase"/>
</dbReference>
<dbReference type="InterPro" id="IPR020630">
    <property type="entry name" value="THF_DH/CycHdrlase_cat_dom"/>
</dbReference>
<dbReference type="InterPro" id="IPR020867">
    <property type="entry name" value="THF_DH/CycHdrlase_CS"/>
</dbReference>
<dbReference type="InterPro" id="IPR020631">
    <property type="entry name" value="THF_DH/CycHdrlase_NAD-bd_dom"/>
</dbReference>
<dbReference type="NCBIfam" id="NF008058">
    <property type="entry name" value="PRK10792.1"/>
    <property type="match status" value="1"/>
</dbReference>
<dbReference type="NCBIfam" id="NF010783">
    <property type="entry name" value="PRK14186.1"/>
    <property type="match status" value="1"/>
</dbReference>
<dbReference type="NCBIfam" id="NF010786">
    <property type="entry name" value="PRK14189.1"/>
    <property type="match status" value="1"/>
</dbReference>
<dbReference type="PANTHER" id="PTHR48099:SF5">
    <property type="entry name" value="C-1-TETRAHYDROFOLATE SYNTHASE, CYTOPLASMIC"/>
    <property type="match status" value="1"/>
</dbReference>
<dbReference type="PANTHER" id="PTHR48099">
    <property type="entry name" value="C-1-TETRAHYDROFOLATE SYNTHASE, CYTOPLASMIC-RELATED"/>
    <property type="match status" value="1"/>
</dbReference>
<dbReference type="Pfam" id="PF00763">
    <property type="entry name" value="THF_DHG_CYH"/>
    <property type="match status" value="1"/>
</dbReference>
<dbReference type="Pfam" id="PF02882">
    <property type="entry name" value="THF_DHG_CYH_C"/>
    <property type="match status" value="1"/>
</dbReference>
<dbReference type="PRINTS" id="PR00085">
    <property type="entry name" value="THFDHDRGNASE"/>
</dbReference>
<dbReference type="SUPFAM" id="SSF53223">
    <property type="entry name" value="Aminoacid dehydrogenase-like, N-terminal domain"/>
    <property type="match status" value="1"/>
</dbReference>
<dbReference type="SUPFAM" id="SSF51735">
    <property type="entry name" value="NAD(P)-binding Rossmann-fold domains"/>
    <property type="match status" value="1"/>
</dbReference>
<dbReference type="PROSITE" id="PS00766">
    <property type="entry name" value="THF_DHG_CYH_1"/>
    <property type="match status" value="1"/>
</dbReference>
<dbReference type="PROSITE" id="PS00767">
    <property type="entry name" value="THF_DHG_CYH_2"/>
    <property type="match status" value="1"/>
</dbReference>
<organism>
    <name type="scientific">Polaromonas naphthalenivorans (strain CJ2)</name>
    <dbReference type="NCBI Taxonomy" id="365044"/>
    <lineage>
        <taxon>Bacteria</taxon>
        <taxon>Pseudomonadati</taxon>
        <taxon>Pseudomonadota</taxon>
        <taxon>Betaproteobacteria</taxon>
        <taxon>Burkholderiales</taxon>
        <taxon>Comamonadaceae</taxon>
        <taxon>Polaromonas</taxon>
    </lineage>
</organism>
<gene>
    <name evidence="1" type="primary">folD</name>
    <name type="ordered locus">Pnap_1778</name>
</gene>
<sequence>MTAQLIDGNALSRQLRTEVAQRAALLRARGITPGLAVVLVGDNPASQVYVRNKVKACEDNGLHSVLERYPAEMSEADLLARVEALNNDPAIHGILVQLPLPAHIDAQKVIEAISPAKDVDGFHVGSAGALMVGQPGFWPCTPYGCMKMLESIGYDLRGKHAVVIGRSNIVGKPMALMLLQKNATVTICHSATADLKAMTLQADVIVAAVGKRNVLRADMVKPGAVVIDVGMNRNEEGKLCGDVDFDGVKEVAGYITPVPGGVGPMTITMLLVNTLEAAERG</sequence>
<proteinExistence type="inferred from homology"/>
<accession>A1VN60</accession>
<reference key="1">
    <citation type="journal article" date="2009" name="Environ. Microbiol.">
        <title>The genome of Polaromonas naphthalenivorans strain CJ2, isolated from coal tar-contaminated sediment, reveals physiological and metabolic versatility and evolution through extensive horizontal gene transfer.</title>
        <authorList>
            <person name="Yagi J.M."/>
            <person name="Sims D."/>
            <person name="Brettin T."/>
            <person name="Bruce D."/>
            <person name="Madsen E.L."/>
        </authorList>
    </citation>
    <scope>NUCLEOTIDE SEQUENCE [LARGE SCALE GENOMIC DNA]</scope>
    <source>
        <strain>CJ2</strain>
    </source>
</reference>
<keyword id="KW-0028">Amino-acid biosynthesis</keyword>
<keyword id="KW-0368">Histidine biosynthesis</keyword>
<keyword id="KW-0378">Hydrolase</keyword>
<keyword id="KW-0486">Methionine biosynthesis</keyword>
<keyword id="KW-0511">Multifunctional enzyme</keyword>
<keyword id="KW-0521">NADP</keyword>
<keyword id="KW-0554">One-carbon metabolism</keyword>
<keyword id="KW-0560">Oxidoreductase</keyword>
<keyword id="KW-0658">Purine biosynthesis</keyword>
<keyword id="KW-1185">Reference proteome</keyword>